<name>DNLJ_SHEB5</name>
<accession>A3D5Y2</accession>
<evidence type="ECO:0000255" key="1">
    <source>
        <dbReference type="HAMAP-Rule" id="MF_01588"/>
    </source>
</evidence>
<sequence>MKEFKFNDEQLSTIQELEVDIDLKKLEIAISKESIDELSEDELLALLKVTNALYRSGFPVIEDILYDSFWNKFALNHPNHPFITSVETEVLNLGKTVALPQKMLSTDKAYSKEEIKKWLDRILKAAEELDIDTNEIEIRITPKLDGYAAFDDGERLYTRGDGVKGQDVSRAFERGLKVVRNSERGLGAGEIVINKAYFEKKLSQYFENSRNIQAAIIAEKNVDERVLEAIKEGACVFHPFAVLPNWTGNYQDLMTDFDGIIEQVWNSVEYDVDGVILEATDTRIKEHMGANRKFHRWQIAFKINDEVAEVEVISVTPQTSRTGRVTPVAELVPTRISGAMISRVTVHHYNMVKINGVGPGAIVQIVRSGLVIPKIEKVIKPVDPQMPELCPSCKSHLLWESDHLVCPNKSDCPAQTENTLVHFFKTLANNDGFGPKNIEKLANLGVKHIHQMYDLKPHQFAMYGFGEKTSKNLYDQLQASKNIEIEDWRFLSAFGVSRLGGGNCEKLLQHYSLRELFEATVEDIAELNGFARVSAEAIVKGLANIKEEFFKVYDLGFNLSITPKQSELESLASPLTGKIVVFTGKMLQGKRSDMEKHAKALGAKVGTSVTSNTTYLIAGLKVGETKINDAKEKGVKVLSEQEYLDLIS</sequence>
<protein>
    <recommendedName>
        <fullName evidence="1">DNA ligase</fullName>
        <ecNumber evidence="1">6.5.1.2</ecNumber>
    </recommendedName>
    <alternativeName>
        <fullName evidence="1">Polydeoxyribonucleotide synthase [NAD(+)]</fullName>
    </alternativeName>
</protein>
<keyword id="KW-0227">DNA damage</keyword>
<keyword id="KW-0234">DNA repair</keyword>
<keyword id="KW-0235">DNA replication</keyword>
<keyword id="KW-0436">Ligase</keyword>
<keyword id="KW-0460">Magnesium</keyword>
<keyword id="KW-0464">Manganese</keyword>
<keyword id="KW-0479">Metal-binding</keyword>
<keyword id="KW-0520">NAD</keyword>
<keyword id="KW-1185">Reference proteome</keyword>
<keyword id="KW-0862">Zinc</keyword>
<proteinExistence type="inferred from homology"/>
<feature type="chain" id="PRO_0000313423" description="DNA ligase">
    <location>
        <begin position="1"/>
        <end position="648"/>
    </location>
</feature>
<feature type="domain" description="BRCT" evidence="1">
    <location>
        <begin position="570"/>
        <end position="648"/>
    </location>
</feature>
<feature type="active site" description="N6-AMP-lysine intermediate" evidence="1">
    <location>
        <position position="143"/>
    </location>
</feature>
<feature type="binding site" evidence="1">
    <location>
        <begin position="63"/>
        <end position="67"/>
    </location>
    <ligand>
        <name>NAD(+)</name>
        <dbReference type="ChEBI" id="CHEBI:57540"/>
    </ligand>
</feature>
<feature type="binding site" evidence="1">
    <location>
        <begin position="105"/>
        <end position="106"/>
    </location>
    <ligand>
        <name>NAD(+)</name>
        <dbReference type="ChEBI" id="CHEBI:57540"/>
    </ligand>
</feature>
<feature type="binding site" evidence="1">
    <location>
        <position position="159"/>
    </location>
    <ligand>
        <name>NAD(+)</name>
        <dbReference type="ChEBI" id="CHEBI:57540"/>
    </ligand>
</feature>
<feature type="binding site" evidence="1">
    <location>
        <position position="190"/>
    </location>
    <ligand>
        <name>NAD(+)</name>
        <dbReference type="ChEBI" id="CHEBI:57540"/>
    </ligand>
</feature>
<feature type="binding site" evidence="1">
    <location>
        <position position="302"/>
    </location>
    <ligand>
        <name>NAD(+)</name>
        <dbReference type="ChEBI" id="CHEBI:57540"/>
    </ligand>
</feature>
<feature type="binding site" evidence="1">
    <location>
        <position position="390"/>
    </location>
    <ligand>
        <name>Zn(2+)</name>
        <dbReference type="ChEBI" id="CHEBI:29105"/>
    </ligand>
</feature>
<feature type="binding site" evidence="1">
    <location>
        <position position="393"/>
    </location>
    <ligand>
        <name>Zn(2+)</name>
        <dbReference type="ChEBI" id="CHEBI:29105"/>
    </ligand>
</feature>
<feature type="binding site" evidence="1">
    <location>
        <position position="406"/>
    </location>
    <ligand>
        <name>Zn(2+)</name>
        <dbReference type="ChEBI" id="CHEBI:29105"/>
    </ligand>
</feature>
<feature type="binding site" evidence="1">
    <location>
        <position position="412"/>
    </location>
    <ligand>
        <name>Zn(2+)</name>
        <dbReference type="ChEBI" id="CHEBI:29105"/>
    </ligand>
</feature>
<gene>
    <name evidence="1" type="primary">ligA</name>
    <name type="ordered locus">Sbal_2653</name>
</gene>
<reference key="1">
    <citation type="submission" date="2007-02" db="EMBL/GenBank/DDBJ databases">
        <title>Complete sequence of chromosome of Shewanella baltica OS155.</title>
        <authorList>
            <consortium name="US DOE Joint Genome Institute"/>
            <person name="Copeland A."/>
            <person name="Lucas S."/>
            <person name="Lapidus A."/>
            <person name="Barry K."/>
            <person name="Detter J.C."/>
            <person name="Glavina del Rio T."/>
            <person name="Hammon N."/>
            <person name="Israni S."/>
            <person name="Dalin E."/>
            <person name="Tice H."/>
            <person name="Pitluck S."/>
            <person name="Sims D.R."/>
            <person name="Brettin T."/>
            <person name="Bruce D."/>
            <person name="Han C."/>
            <person name="Tapia R."/>
            <person name="Brainard J."/>
            <person name="Schmutz J."/>
            <person name="Larimer F."/>
            <person name="Land M."/>
            <person name="Hauser L."/>
            <person name="Kyrpides N."/>
            <person name="Mikhailova N."/>
            <person name="Brettar I."/>
            <person name="Klappenbach J."/>
            <person name="Konstantinidis K."/>
            <person name="Rodrigues J."/>
            <person name="Tiedje J."/>
            <person name="Richardson P."/>
        </authorList>
    </citation>
    <scope>NUCLEOTIDE SEQUENCE [LARGE SCALE GENOMIC DNA]</scope>
    <source>
        <strain>OS155 / ATCC BAA-1091</strain>
    </source>
</reference>
<dbReference type="EC" id="6.5.1.2" evidence="1"/>
<dbReference type="EMBL" id="CP000563">
    <property type="protein sequence ID" value="ABN62145.1"/>
    <property type="molecule type" value="Genomic_DNA"/>
</dbReference>
<dbReference type="RefSeq" id="WP_011847116.1">
    <property type="nucleotide sequence ID" value="NC_009052.1"/>
</dbReference>
<dbReference type="SMR" id="A3D5Y2"/>
<dbReference type="STRING" id="325240.Sbal_2653"/>
<dbReference type="KEGG" id="sbl:Sbal_2653"/>
<dbReference type="HOGENOM" id="CLU_007764_2_0_6"/>
<dbReference type="OrthoDB" id="9759736at2"/>
<dbReference type="Proteomes" id="UP000001557">
    <property type="component" value="Chromosome"/>
</dbReference>
<dbReference type="GO" id="GO:0003911">
    <property type="term" value="F:DNA ligase (NAD+) activity"/>
    <property type="evidence" value="ECO:0007669"/>
    <property type="project" value="UniProtKB-UniRule"/>
</dbReference>
<dbReference type="GO" id="GO:0046872">
    <property type="term" value="F:metal ion binding"/>
    <property type="evidence" value="ECO:0007669"/>
    <property type="project" value="UniProtKB-KW"/>
</dbReference>
<dbReference type="GO" id="GO:0006281">
    <property type="term" value="P:DNA repair"/>
    <property type="evidence" value="ECO:0007669"/>
    <property type="project" value="UniProtKB-KW"/>
</dbReference>
<dbReference type="GO" id="GO:0006260">
    <property type="term" value="P:DNA replication"/>
    <property type="evidence" value="ECO:0007669"/>
    <property type="project" value="UniProtKB-KW"/>
</dbReference>
<dbReference type="CDD" id="cd17748">
    <property type="entry name" value="BRCT_DNA_ligase_like"/>
    <property type="match status" value="1"/>
</dbReference>
<dbReference type="Gene3D" id="1.10.150.20">
    <property type="entry name" value="5' to 3' exonuclease, C-terminal subdomain"/>
    <property type="match status" value="2"/>
</dbReference>
<dbReference type="Gene3D" id="3.40.50.10190">
    <property type="entry name" value="BRCT domain"/>
    <property type="match status" value="1"/>
</dbReference>
<dbReference type="Gene3D" id="3.30.470.30">
    <property type="entry name" value="DNA ligase/mRNA capping enzyme"/>
    <property type="match status" value="1"/>
</dbReference>
<dbReference type="Gene3D" id="2.40.50.140">
    <property type="entry name" value="Nucleic acid-binding proteins"/>
    <property type="match status" value="1"/>
</dbReference>
<dbReference type="HAMAP" id="MF_01588">
    <property type="entry name" value="DNA_ligase_A"/>
    <property type="match status" value="1"/>
</dbReference>
<dbReference type="InterPro" id="IPR001357">
    <property type="entry name" value="BRCT_dom"/>
</dbReference>
<dbReference type="InterPro" id="IPR036420">
    <property type="entry name" value="BRCT_dom_sf"/>
</dbReference>
<dbReference type="InterPro" id="IPR001679">
    <property type="entry name" value="DNA_ligase"/>
</dbReference>
<dbReference type="InterPro" id="IPR013839">
    <property type="entry name" value="DNAligase_adenylation"/>
</dbReference>
<dbReference type="InterPro" id="IPR013840">
    <property type="entry name" value="DNAligase_N"/>
</dbReference>
<dbReference type="InterPro" id="IPR012340">
    <property type="entry name" value="NA-bd_OB-fold"/>
</dbReference>
<dbReference type="InterPro" id="IPR004150">
    <property type="entry name" value="NAD_DNA_ligase_OB"/>
</dbReference>
<dbReference type="InterPro" id="IPR010994">
    <property type="entry name" value="RuvA_2-like"/>
</dbReference>
<dbReference type="Pfam" id="PF00533">
    <property type="entry name" value="BRCT"/>
    <property type="match status" value="1"/>
</dbReference>
<dbReference type="Pfam" id="PF01653">
    <property type="entry name" value="DNA_ligase_aden"/>
    <property type="match status" value="1"/>
</dbReference>
<dbReference type="Pfam" id="PF03120">
    <property type="entry name" value="DNA_ligase_OB"/>
    <property type="match status" value="1"/>
</dbReference>
<dbReference type="PIRSF" id="PIRSF001604">
    <property type="entry name" value="LigA"/>
    <property type="match status" value="1"/>
</dbReference>
<dbReference type="SMART" id="SM00292">
    <property type="entry name" value="BRCT"/>
    <property type="match status" value="1"/>
</dbReference>
<dbReference type="SMART" id="SM00532">
    <property type="entry name" value="LIGANc"/>
    <property type="match status" value="1"/>
</dbReference>
<dbReference type="SUPFAM" id="SSF52113">
    <property type="entry name" value="BRCT domain"/>
    <property type="match status" value="1"/>
</dbReference>
<dbReference type="SUPFAM" id="SSF56091">
    <property type="entry name" value="DNA ligase/mRNA capping enzyme, catalytic domain"/>
    <property type="match status" value="1"/>
</dbReference>
<dbReference type="SUPFAM" id="SSF50249">
    <property type="entry name" value="Nucleic acid-binding proteins"/>
    <property type="match status" value="1"/>
</dbReference>
<dbReference type="SUPFAM" id="SSF47781">
    <property type="entry name" value="RuvA domain 2-like"/>
    <property type="match status" value="1"/>
</dbReference>
<dbReference type="PROSITE" id="PS50172">
    <property type="entry name" value="BRCT"/>
    <property type="match status" value="1"/>
</dbReference>
<comment type="function">
    <text evidence="1">DNA ligase that catalyzes the formation of phosphodiester linkages between 5'-phosphoryl and 3'-hydroxyl groups in double-stranded DNA using NAD as a coenzyme and as the energy source for the reaction. It is essential for DNA replication and repair of damaged DNA.</text>
</comment>
<comment type="catalytic activity">
    <reaction evidence="1">
        <text>NAD(+) + (deoxyribonucleotide)n-3'-hydroxyl + 5'-phospho-(deoxyribonucleotide)m = (deoxyribonucleotide)n+m + AMP + beta-nicotinamide D-nucleotide.</text>
        <dbReference type="EC" id="6.5.1.2"/>
    </reaction>
</comment>
<comment type="cofactor">
    <cofactor evidence="1">
        <name>Mg(2+)</name>
        <dbReference type="ChEBI" id="CHEBI:18420"/>
    </cofactor>
    <cofactor evidence="1">
        <name>Mn(2+)</name>
        <dbReference type="ChEBI" id="CHEBI:29035"/>
    </cofactor>
</comment>
<comment type="similarity">
    <text evidence="1">Belongs to the NAD-dependent DNA ligase family. LigA subfamily.</text>
</comment>
<organism>
    <name type="scientific">Shewanella baltica (strain OS155 / ATCC BAA-1091)</name>
    <dbReference type="NCBI Taxonomy" id="325240"/>
    <lineage>
        <taxon>Bacteria</taxon>
        <taxon>Pseudomonadati</taxon>
        <taxon>Pseudomonadota</taxon>
        <taxon>Gammaproteobacteria</taxon>
        <taxon>Alteromonadales</taxon>
        <taxon>Shewanellaceae</taxon>
        <taxon>Shewanella</taxon>
    </lineage>
</organism>